<accession>Q9EPB5</accession>
<accession>Q9DCZ8</accession>
<feature type="chain" id="PRO_0000097693" description="Serine hydrolase-like protein">
    <location>
        <begin position="1"/>
        <end position="311"/>
    </location>
</feature>
<feature type="domain" description="AB hydrolase-1" evidence="1">
    <location>
        <begin position="27"/>
        <end position="227"/>
    </location>
</feature>
<feature type="active site" evidence="1">
    <location>
        <position position="102"/>
    </location>
</feature>
<feature type="modified residue" description="Phosphoserine" evidence="3">
    <location>
        <position position="210"/>
    </location>
</feature>
<feature type="sequence conflict" description="In Ref. 2; BAB22007." evidence="2" ref="2">
    <original>W</original>
    <variation>R</variation>
    <location>
        <position position="13"/>
    </location>
</feature>
<keyword id="KW-0025">Alternative splicing</keyword>
<keyword id="KW-0963">Cytoplasm</keyword>
<keyword id="KW-0378">Hydrolase</keyword>
<keyword id="KW-0576">Peroxisome</keyword>
<keyword id="KW-0597">Phosphoprotein</keyword>
<keyword id="KW-1185">Reference proteome</keyword>
<evidence type="ECO:0000255" key="1"/>
<evidence type="ECO:0000305" key="2"/>
<evidence type="ECO:0007744" key="3">
    <source>
    </source>
</evidence>
<protein>
    <recommendedName>
        <fullName>Serine hydrolase-like protein</fullName>
        <shortName>SHL</shortName>
        <ecNumber>3.1.-.-</ecNumber>
    </recommendedName>
</protein>
<proteinExistence type="evidence at protein level"/>
<gene>
    <name type="primary">Serhl</name>
</gene>
<reference key="1">
    <citation type="journal article" date="2001" name="Genomics">
        <title>Identification of Serhl, a new member of the serine hydrolase family induced by passive stretch of skeletal muscle in vivo.</title>
        <authorList>
            <person name="Sadusky T.J."/>
            <person name="Kemp T.J."/>
            <person name="Simon M."/>
            <person name="Carey N."/>
            <person name="Coulton G.R."/>
        </authorList>
    </citation>
    <scope>NUCLEOTIDE SEQUENCE [MRNA]</scope>
    <source>
        <strain>C57BL/10</strain>
        <tissue>Muscle</tissue>
    </source>
</reference>
<reference key="2">
    <citation type="journal article" date="2005" name="Science">
        <title>The transcriptional landscape of the mammalian genome.</title>
        <authorList>
            <person name="Carninci P."/>
            <person name="Kasukawa T."/>
            <person name="Katayama S."/>
            <person name="Gough J."/>
            <person name="Frith M.C."/>
            <person name="Maeda N."/>
            <person name="Oyama R."/>
            <person name="Ravasi T."/>
            <person name="Lenhard B."/>
            <person name="Wells C."/>
            <person name="Kodzius R."/>
            <person name="Shimokawa K."/>
            <person name="Bajic V.B."/>
            <person name="Brenner S.E."/>
            <person name="Batalov S."/>
            <person name="Forrest A.R."/>
            <person name="Zavolan M."/>
            <person name="Davis M.J."/>
            <person name="Wilming L.G."/>
            <person name="Aidinis V."/>
            <person name="Allen J.E."/>
            <person name="Ambesi-Impiombato A."/>
            <person name="Apweiler R."/>
            <person name="Aturaliya R.N."/>
            <person name="Bailey T.L."/>
            <person name="Bansal M."/>
            <person name="Baxter L."/>
            <person name="Beisel K.W."/>
            <person name="Bersano T."/>
            <person name="Bono H."/>
            <person name="Chalk A.M."/>
            <person name="Chiu K.P."/>
            <person name="Choudhary V."/>
            <person name="Christoffels A."/>
            <person name="Clutterbuck D.R."/>
            <person name="Crowe M.L."/>
            <person name="Dalla E."/>
            <person name="Dalrymple B.P."/>
            <person name="de Bono B."/>
            <person name="Della Gatta G."/>
            <person name="di Bernardo D."/>
            <person name="Down T."/>
            <person name="Engstrom P."/>
            <person name="Fagiolini M."/>
            <person name="Faulkner G."/>
            <person name="Fletcher C.F."/>
            <person name="Fukushima T."/>
            <person name="Furuno M."/>
            <person name="Futaki S."/>
            <person name="Gariboldi M."/>
            <person name="Georgii-Hemming P."/>
            <person name="Gingeras T.R."/>
            <person name="Gojobori T."/>
            <person name="Green R.E."/>
            <person name="Gustincich S."/>
            <person name="Harbers M."/>
            <person name="Hayashi Y."/>
            <person name="Hensch T.K."/>
            <person name="Hirokawa N."/>
            <person name="Hill D."/>
            <person name="Huminiecki L."/>
            <person name="Iacono M."/>
            <person name="Ikeo K."/>
            <person name="Iwama A."/>
            <person name="Ishikawa T."/>
            <person name="Jakt M."/>
            <person name="Kanapin A."/>
            <person name="Katoh M."/>
            <person name="Kawasawa Y."/>
            <person name="Kelso J."/>
            <person name="Kitamura H."/>
            <person name="Kitano H."/>
            <person name="Kollias G."/>
            <person name="Krishnan S.P."/>
            <person name="Kruger A."/>
            <person name="Kummerfeld S.K."/>
            <person name="Kurochkin I.V."/>
            <person name="Lareau L.F."/>
            <person name="Lazarevic D."/>
            <person name="Lipovich L."/>
            <person name="Liu J."/>
            <person name="Liuni S."/>
            <person name="McWilliam S."/>
            <person name="Madan Babu M."/>
            <person name="Madera M."/>
            <person name="Marchionni L."/>
            <person name="Matsuda H."/>
            <person name="Matsuzawa S."/>
            <person name="Miki H."/>
            <person name="Mignone F."/>
            <person name="Miyake S."/>
            <person name="Morris K."/>
            <person name="Mottagui-Tabar S."/>
            <person name="Mulder N."/>
            <person name="Nakano N."/>
            <person name="Nakauchi H."/>
            <person name="Ng P."/>
            <person name="Nilsson R."/>
            <person name="Nishiguchi S."/>
            <person name="Nishikawa S."/>
            <person name="Nori F."/>
            <person name="Ohara O."/>
            <person name="Okazaki Y."/>
            <person name="Orlando V."/>
            <person name="Pang K.C."/>
            <person name="Pavan W.J."/>
            <person name="Pavesi G."/>
            <person name="Pesole G."/>
            <person name="Petrovsky N."/>
            <person name="Piazza S."/>
            <person name="Reed J."/>
            <person name="Reid J.F."/>
            <person name="Ring B.Z."/>
            <person name="Ringwald M."/>
            <person name="Rost B."/>
            <person name="Ruan Y."/>
            <person name="Salzberg S.L."/>
            <person name="Sandelin A."/>
            <person name="Schneider C."/>
            <person name="Schoenbach C."/>
            <person name="Sekiguchi K."/>
            <person name="Semple C.A."/>
            <person name="Seno S."/>
            <person name="Sessa L."/>
            <person name="Sheng Y."/>
            <person name="Shibata Y."/>
            <person name="Shimada H."/>
            <person name="Shimada K."/>
            <person name="Silva D."/>
            <person name="Sinclair B."/>
            <person name="Sperling S."/>
            <person name="Stupka E."/>
            <person name="Sugiura K."/>
            <person name="Sultana R."/>
            <person name="Takenaka Y."/>
            <person name="Taki K."/>
            <person name="Tammoja K."/>
            <person name="Tan S.L."/>
            <person name="Tang S."/>
            <person name="Taylor M.S."/>
            <person name="Tegner J."/>
            <person name="Teichmann S.A."/>
            <person name="Ueda H.R."/>
            <person name="van Nimwegen E."/>
            <person name="Verardo R."/>
            <person name="Wei C.L."/>
            <person name="Yagi K."/>
            <person name="Yamanishi H."/>
            <person name="Zabarovsky E."/>
            <person name="Zhu S."/>
            <person name="Zimmer A."/>
            <person name="Hide W."/>
            <person name="Bult C."/>
            <person name="Grimmond S.M."/>
            <person name="Teasdale R.D."/>
            <person name="Liu E.T."/>
            <person name="Brusic V."/>
            <person name="Quackenbush J."/>
            <person name="Wahlestedt C."/>
            <person name="Mattick J.S."/>
            <person name="Hume D.A."/>
            <person name="Kai C."/>
            <person name="Sasaki D."/>
            <person name="Tomaru Y."/>
            <person name="Fukuda S."/>
            <person name="Kanamori-Katayama M."/>
            <person name="Suzuki M."/>
            <person name="Aoki J."/>
            <person name="Arakawa T."/>
            <person name="Iida J."/>
            <person name="Imamura K."/>
            <person name="Itoh M."/>
            <person name="Kato T."/>
            <person name="Kawaji H."/>
            <person name="Kawagashira N."/>
            <person name="Kawashima T."/>
            <person name="Kojima M."/>
            <person name="Kondo S."/>
            <person name="Konno H."/>
            <person name="Nakano K."/>
            <person name="Ninomiya N."/>
            <person name="Nishio T."/>
            <person name="Okada M."/>
            <person name="Plessy C."/>
            <person name="Shibata K."/>
            <person name="Shiraki T."/>
            <person name="Suzuki S."/>
            <person name="Tagami M."/>
            <person name="Waki K."/>
            <person name="Watahiki A."/>
            <person name="Okamura-Oho Y."/>
            <person name="Suzuki H."/>
            <person name="Kawai J."/>
            <person name="Hayashizaki Y."/>
        </authorList>
    </citation>
    <scope>NUCLEOTIDE SEQUENCE [LARGE SCALE MRNA]</scope>
    <source>
        <strain>C57BL/6J</strain>
        <tissue>Embryo</tissue>
        <tissue>Kidney</tissue>
    </source>
</reference>
<reference key="3">
    <citation type="journal article" date="2004" name="Genome Res.">
        <title>The status, quality, and expansion of the NIH full-length cDNA project: the Mammalian Gene Collection (MGC).</title>
        <authorList>
            <consortium name="The MGC Project Team"/>
        </authorList>
    </citation>
    <scope>NUCLEOTIDE SEQUENCE [LARGE SCALE MRNA]</scope>
    <source>
        <strain>FVB/N</strain>
        <tissue>Mammary gland</tissue>
    </source>
</reference>
<reference key="4">
    <citation type="journal article" date="2010" name="Cell">
        <title>A tissue-specific atlas of mouse protein phosphorylation and expression.</title>
        <authorList>
            <person name="Huttlin E.L."/>
            <person name="Jedrychowski M.P."/>
            <person name="Elias J.E."/>
            <person name="Goswami T."/>
            <person name="Rad R."/>
            <person name="Beausoleil S.A."/>
            <person name="Villen J."/>
            <person name="Haas W."/>
            <person name="Sowa M.E."/>
            <person name="Gygi S.P."/>
        </authorList>
    </citation>
    <scope>PHOSPHORYLATION [LARGE SCALE ANALYSIS] AT SER-210</scope>
    <scope>IDENTIFICATION BY MASS SPECTROMETRY [LARGE SCALE ANALYSIS]</scope>
    <source>
        <tissue>Brown adipose tissue</tissue>
        <tissue>Heart</tissue>
        <tissue>Kidney</tissue>
        <tissue>Liver</tissue>
        <tissue>Lung</tissue>
        <tissue>Testis</tissue>
    </source>
</reference>
<dbReference type="EC" id="3.1.-.-"/>
<dbReference type="EMBL" id="AJ251200">
    <property type="protein sequence ID" value="CAC20674.1"/>
    <property type="molecule type" value="mRNA"/>
</dbReference>
<dbReference type="EMBL" id="AJ245737">
    <property type="protein sequence ID" value="CAC20673.1"/>
    <property type="molecule type" value="mRNA"/>
</dbReference>
<dbReference type="EMBL" id="AK002313">
    <property type="protein sequence ID" value="BAB22007.1"/>
    <property type="molecule type" value="mRNA"/>
</dbReference>
<dbReference type="EMBL" id="AK003827">
    <property type="protein sequence ID" value="BAB23023.1"/>
    <property type="molecule type" value="mRNA"/>
</dbReference>
<dbReference type="EMBL" id="BC055431">
    <property type="protein sequence ID" value="AAH55431.1"/>
    <property type="molecule type" value="mRNA"/>
</dbReference>
<dbReference type="CCDS" id="CCDS49682.1">
    <molecule id="Q9EPB5-1"/>
</dbReference>
<dbReference type="RefSeq" id="NP_075964.1">
    <molecule id="Q9EPB5-1"/>
    <property type="nucleotide sequence ID" value="NM_023475.3"/>
</dbReference>
<dbReference type="SMR" id="Q9EPB5"/>
<dbReference type="FunCoup" id="Q9EPB5">
    <property type="interactions" value="515"/>
</dbReference>
<dbReference type="STRING" id="10090.ENSMUSP00000077345"/>
<dbReference type="ChEMBL" id="CHEMBL3259500"/>
<dbReference type="ESTHER" id="mouse-SERHL">
    <property type="family name" value="SERHL"/>
</dbReference>
<dbReference type="MEROPS" id="S33.012"/>
<dbReference type="iPTMnet" id="Q9EPB5"/>
<dbReference type="PhosphoSitePlus" id="Q9EPB5"/>
<dbReference type="jPOST" id="Q9EPB5"/>
<dbReference type="PaxDb" id="10090-ENSMUSP00000077345"/>
<dbReference type="ProteomicsDB" id="261322">
    <molecule id="Q9EPB5-1"/>
</dbReference>
<dbReference type="Pumba" id="Q9EPB5"/>
<dbReference type="Antibodypedia" id="45931">
    <property type="antibodies" value="74 antibodies from 13 providers"/>
</dbReference>
<dbReference type="DNASU" id="68607"/>
<dbReference type="Ensembl" id="ENSMUST00000078218.11">
    <molecule id="Q9EPB5-1"/>
    <property type="protein sequence ID" value="ENSMUSP00000077345.5"/>
    <property type="gene ID" value="ENSMUSG00000058586.13"/>
</dbReference>
<dbReference type="GeneID" id="68607"/>
<dbReference type="KEGG" id="mmu:68607"/>
<dbReference type="UCSC" id="uc011zwz.1">
    <molecule id="Q9EPB5-1"/>
    <property type="organism name" value="mouse"/>
</dbReference>
<dbReference type="AGR" id="MGI:1890404"/>
<dbReference type="CTD" id="94009"/>
<dbReference type="MGI" id="MGI:1890404">
    <property type="gene designation" value="Serhl"/>
</dbReference>
<dbReference type="VEuPathDB" id="HostDB:ENSMUSG00000058586"/>
<dbReference type="eggNOG" id="KOG1454">
    <property type="taxonomic scope" value="Eukaryota"/>
</dbReference>
<dbReference type="GeneTree" id="ENSGT00530000063960"/>
<dbReference type="HOGENOM" id="CLU_020336_8_3_1"/>
<dbReference type="InParanoid" id="Q9EPB5"/>
<dbReference type="OMA" id="HGWMDVS"/>
<dbReference type="OrthoDB" id="24237at9989"/>
<dbReference type="PhylomeDB" id="Q9EPB5"/>
<dbReference type="TreeFam" id="TF326547"/>
<dbReference type="BioGRID-ORCS" id="68607">
    <property type="hits" value="5 hits in 77 CRISPR screens"/>
</dbReference>
<dbReference type="ChiTaRS" id="Serhl">
    <property type="organism name" value="mouse"/>
</dbReference>
<dbReference type="PRO" id="PR:Q9EPB5"/>
<dbReference type="Proteomes" id="UP000000589">
    <property type="component" value="Chromosome 15"/>
</dbReference>
<dbReference type="RNAct" id="Q9EPB5">
    <property type="molecule type" value="protein"/>
</dbReference>
<dbReference type="Bgee" id="ENSMUSG00000058586">
    <property type="expression patterns" value="Expressed in ventricular system choroidal fissure and 232 other cell types or tissues"/>
</dbReference>
<dbReference type="ExpressionAtlas" id="Q9EPB5">
    <property type="expression patterns" value="baseline and differential"/>
</dbReference>
<dbReference type="GO" id="GO:0031410">
    <property type="term" value="C:cytoplasmic vesicle"/>
    <property type="evidence" value="ECO:0000314"/>
    <property type="project" value="MGI"/>
</dbReference>
<dbReference type="GO" id="GO:0005739">
    <property type="term" value="C:mitochondrion"/>
    <property type="evidence" value="ECO:0007005"/>
    <property type="project" value="MGI"/>
</dbReference>
<dbReference type="GO" id="GO:0048471">
    <property type="term" value="C:perinuclear region of cytoplasm"/>
    <property type="evidence" value="ECO:0007669"/>
    <property type="project" value="UniProtKB-SubCell"/>
</dbReference>
<dbReference type="GO" id="GO:0005777">
    <property type="term" value="C:peroxisome"/>
    <property type="evidence" value="ECO:0000250"/>
    <property type="project" value="MGI"/>
</dbReference>
<dbReference type="GO" id="GO:0016787">
    <property type="term" value="F:hydrolase activity"/>
    <property type="evidence" value="ECO:0000250"/>
    <property type="project" value="MGI"/>
</dbReference>
<dbReference type="Gene3D" id="3.40.50.1820">
    <property type="entry name" value="alpha/beta hydrolase"/>
    <property type="match status" value="1"/>
</dbReference>
<dbReference type="InterPro" id="IPR000073">
    <property type="entry name" value="AB_hydrolase_1"/>
</dbReference>
<dbReference type="InterPro" id="IPR029058">
    <property type="entry name" value="AB_hydrolase_fold"/>
</dbReference>
<dbReference type="InterPro" id="IPR050266">
    <property type="entry name" value="AB_hydrolase_sf"/>
</dbReference>
<dbReference type="PANTHER" id="PTHR43798">
    <property type="entry name" value="MONOACYLGLYCEROL LIPASE"/>
    <property type="match status" value="1"/>
</dbReference>
<dbReference type="PANTHER" id="PTHR43798:SF14">
    <property type="entry name" value="SERINE HYDROLASE-LIKE PROTEIN DDB_G0286239"/>
    <property type="match status" value="1"/>
</dbReference>
<dbReference type="Pfam" id="PF00561">
    <property type="entry name" value="Abhydrolase_1"/>
    <property type="match status" value="1"/>
</dbReference>
<dbReference type="PRINTS" id="PR00111">
    <property type="entry name" value="ABHYDROLASE"/>
</dbReference>
<dbReference type="SUPFAM" id="SSF53474">
    <property type="entry name" value="alpha/beta-Hydrolases"/>
    <property type="match status" value="1"/>
</dbReference>
<sequence>MGLHSELKLAVPWGHIALKVWGSQKNPPVLCLHGWLDNANSFDRLIPLLPQDFCYMAMDFGGHGLSSHYNPGLPYYQQNFVSEVRRVATAFKWNQFTLLGHSFGGCVGGTFACMFPEMVDKLILLDSTPFFLDSNEMENILTYRRRNIEHTLQVEASQKKSLRAVSPEEMLQGFLNNNSHLDKDCGELILQRGTTKVDAGLVLNRDRRISWPENSFDFVSKEMFVHSAKSLQASVLMIKALQGYYDVRRANDADKAPMHFMVDTLRSTLKERFQFVEVPGNHYIHMNKPQVVAGVVGPFLQGLQRMTSARL</sequence>
<name>SERHL_MOUSE</name>
<organism>
    <name type="scientific">Mus musculus</name>
    <name type="common">Mouse</name>
    <dbReference type="NCBI Taxonomy" id="10090"/>
    <lineage>
        <taxon>Eukaryota</taxon>
        <taxon>Metazoa</taxon>
        <taxon>Chordata</taxon>
        <taxon>Craniata</taxon>
        <taxon>Vertebrata</taxon>
        <taxon>Euteleostomi</taxon>
        <taxon>Mammalia</taxon>
        <taxon>Eutheria</taxon>
        <taxon>Euarchontoglires</taxon>
        <taxon>Glires</taxon>
        <taxon>Rodentia</taxon>
        <taxon>Myomorpha</taxon>
        <taxon>Muroidea</taxon>
        <taxon>Muridae</taxon>
        <taxon>Murinae</taxon>
        <taxon>Mus</taxon>
        <taxon>Mus</taxon>
    </lineage>
</organism>
<comment type="function">
    <text>Probable serine hydrolase. May be related to cell muscle hypertrophy.</text>
</comment>
<comment type="subcellular location">
    <subcellularLocation>
        <location>Cytoplasm</location>
        <location>Perinuclear region</location>
    </subcellularLocation>
    <subcellularLocation>
        <location>Peroxisome</location>
    </subcellularLocation>
    <text>Concentrated in perinuclear vesicles. May be located in peroxisomes.</text>
</comment>
<comment type="alternative products">
    <event type="alternative splicing"/>
    <isoform>
        <id>Q9EPB5-1</id>
        <name>Serhl-1</name>
        <sequence type="displayed"/>
    </isoform>
    <isoform>
        <id>Q9EPB5-2</id>
        <name>Serhl-2</name>
        <name>short</name>
        <sequence type="not described"/>
    </isoform>
</comment>
<comment type="tissue specificity">
    <text>Ubiquitous. High protein expression in skeletal and cardiac muscle.</text>
</comment>
<comment type="developmental stage">
    <text>Present in both unfused and recently fused myotubes, but not thereafter.</text>
</comment>
<comment type="induction">
    <text>Induced by passive stretch of skeletal muscle.</text>
</comment>
<comment type="similarity">
    <text evidence="2">Belongs to the AB hydrolase superfamily.</text>
</comment>